<protein>
    <recommendedName>
        <fullName evidence="1">Phosphatidylserine decarboxylase proenzyme</fullName>
        <ecNumber evidence="1">4.1.1.65</ecNumber>
    </recommendedName>
    <component>
        <recommendedName>
            <fullName evidence="1">Phosphatidylserine decarboxylase alpha chain</fullName>
        </recommendedName>
    </component>
    <component>
        <recommendedName>
            <fullName evidence="1">Phosphatidylserine decarboxylase beta chain</fullName>
        </recommendedName>
    </component>
</protein>
<organism>
    <name type="scientific">Xylella fastidiosa (strain M23)</name>
    <dbReference type="NCBI Taxonomy" id="405441"/>
    <lineage>
        <taxon>Bacteria</taxon>
        <taxon>Pseudomonadati</taxon>
        <taxon>Pseudomonadota</taxon>
        <taxon>Gammaproteobacteria</taxon>
        <taxon>Lysobacterales</taxon>
        <taxon>Lysobacteraceae</taxon>
        <taxon>Xylella</taxon>
    </lineage>
</organism>
<feature type="chain" id="PRO_1000131418" description="Phosphatidylserine decarboxylase beta chain" evidence="1">
    <location>
        <begin position="1"/>
        <end position="246"/>
    </location>
</feature>
<feature type="chain" id="PRO_1000131419" description="Phosphatidylserine decarboxylase alpha chain" evidence="1">
    <location>
        <begin position="247"/>
        <end position="293"/>
    </location>
</feature>
<feature type="active site" description="Charge relay system; for autoendoproteolytic cleavage activity" evidence="1">
    <location>
        <position position="88"/>
    </location>
</feature>
<feature type="active site" description="Charge relay system; for autoendoproteolytic cleavage activity" evidence="1">
    <location>
        <position position="144"/>
    </location>
</feature>
<feature type="active site" description="Charge relay system; for autoendoproteolytic cleavage activity" evidence="1">
    <location>
        <position position="247"/>
    </location>
</feature>
<feature type="active site" description="Schiff-base intermediate with substrate; via pyruvic acid; for decarboxylase activity" evidence="1">
    <location>
        <position position="247"/>
    </location>
</feature>
<feature type="site" description="Cleavage (non-hydrolytic); by autocatalysis" evidence="1">
    <location>
        <begin position="246"/>
        <end position="247"/>
    </location>
</feature>
<feature type="modified residue" description="Pyruvic acid (Ser); by autocatalysis" evidence="1">
    <location>
        <position position="247"/>
    </location>
</feature>
<keyword id="KW-1003">Cell membrane</keyword>
<keyword id="KW-0210">Decarboxylase</keyword>
<keyword id="KW-0444">Lipid biosynthesis</keyword>
<keyword id="KW-0443">Lipid metabolism</keyword>
<keyword id="KW-0456">Lyase</keyword>
<keyword id="KW-0472">Membrane</keyword>
<keyword id="KW-0594">Phospholipid biosynthesis</keyword>
<keyword id="KW-1208">Phospholipid metabolism</keyword>
<keyword id="KW-0670">Pyruvate</keyword>
<keyword id="KW-0865">Zymogen</keyword>
<gene>
    <name evidence="1" type="primary">psd</name>
    <name type="ordered locus">XfasM23_0634</name>
</gene>
<sequence>MNFVTTLTYLLPHRMLSSLARHVAYCQHPLIKQWLIDTVIAKFDVNLSEAAEPDAHAYPSFNAFFTRSLKAGIRPPDPNPDTLLMPADGRISQLGPIREGRIFQAKGQSFTATELLGDTAAASAFTNGLFATVYLSPRDYHRVHMPCTGQLLKTVHVPGRLFSVGPDAVRQIPRLFARNERLVCHFDTTFGPMVLVMVGALLVSGVETVWGGVEIPAYGDRITYKDYQGRNIAIERFAEMARFNYGSTVIVLLPPNVLTLAPHLTAESPVTLGQALAHRLSLNHSTQAPTQEK</sequence>
<proteinExistence type="inferred from homology"/>
<accession>B2I9I2</accession>
<name>PSD_XYLF2</name>
<evidence type="ECO:0000255" key="1">
    <source>
        <dbReference type="HAMAP-Rule" id="MF_00662"/>
    </source>
</evidence>
<reference key="1">
    <citation type="journal article" date="2010" name="J. Bacteriol.">
        <title>Whole genome sequences of two Xylella fastidiosa strains (M12 and M23) causing almond leaf scorch disease in California.</title>
        <authorList>
            <person name="Chen J."/>
            <person name="Xie G."/>
            <person name="Han S."/>
            <person name="Chertkov O."/>
            <person name="Sims D."/>
            <person name="Civerolo E.L."/>
        </authorList>
    </citation>
    <scope>NUCLEOTIDE SEQUENCE [LARGE SCALE GENOMIC DNA]</scope>
    <source>
        <strain>M23</strain>
    </source>
</reference>
<dbReference type="EC" id="4.1.1.65" evidence="1"/>
<dbReference type="EMBL" id="CP001011">
    <property type="protein sequence ID" value="ACB92076.1"/>
    <property type="molecule type" value="Genomic_DNA"/>
</dbReference>
<dbReference type="SMR" id="B2I9I2"/>
<dbReference type="KEGG" id="xfn:XfasM23_0634"/>
<dbReference type="HOGENOM" id="CLU_029061_4_1_6"/>
<dbReference type="UniPathway" id="UPA00558">
    <property type="reaction ID" value="UER00616"/>
</dbReference>
<dbReference type="Proteomes" id="UP000001698">
    <property type="component" value="Chromosome"/>
</dbReference>
<dbReference type="GO" id="GO:0005886">
    <property type="term" value="C:plasma membrane"/>
    <property type="evidence" value="ECO:0007669"/>
    <property type="project" value="UniProtKB-SubCell"/>
</dbReference>
<dbReference type="GO" id="GO:0004609">
    <property type="term" value="F:phosphatidylserine decarboxylase activity"/>
    <property type="evidence" value="ECO:0007669"/>
    <property type="project" value="UniProtKB-UniRule"/>
</dbReference>
<dbReference type="GO" id="GO:0006646">
    <property type="term" value="P:phosphatidylethanolamine biosynthetic process"/>
    <property type="evidence" value="ECO:0007669"/>
    <property type="project" value="UniProtKB-UniRule"/>
</dbReference>
<dbReference type="HAMAP" id="MF_00662">
    <property type="entry name" value="PS_decarb_PSD_B_type1"/>
    <property type="match status" value="1"/>
</dbReference>
<dbReference type="InterPro" id="IPR003817">
    <property type="entry name" value="PS_Dcarbxylase"/>
</dbReference>
<dbReference type="InterPro" id="IPR033177">
    <property type="entry name" value="PSD-B"/>
</dbReference>
<dbReference type="InterPro" id="IPR033178">
    <property type="entry name" value="PSD_type1_pro"/>
</dbReference>
<dbReference type="NCBIfam" id="TIGR00163">
    <property type="entry name" value="PS_decarb"/>
    <property type="match status" value="1"/>
</dbReference>
<dbReference type="PANTHER" id="PTHR10067">
    <property type="entry name" value="PHOSPHATIDYLSERINE DECARBOXYLASE"/>
    <property type="match status" value="1"/>
</dbReference>
<dbReference type="PANTHER" id="PTHR10067:SF6">
    <property type="entry name" value="PHOSPHATIDYLSERINE DECARBOXYLASE PROENZYME, MITOCHONDRIAL"/>
    <property type="match status" value="1"/>
</dbReference>
<dbReference type="Pfam" id="PF02666">
    <property type="entry name" value="PS_Dcarbxylase"/>
    <property type="match status" value="1"/>
</dbReference>
<comment type="function">
    <text evidence="1">Catalyzes the formation of phosphatidylethanolamine (PtdEtn) from phosphatidylserine (PtdSer).</text>
</comment>
<comment type="catalytic activity">
    <reaction evidence="1">
        <text>a 1,2-diacyl-sn-glycero-3-phospho-L-serine + H(+) = a 1,2-diacyl-sn-glycero-3-phosphoethanolamine + CO2</text>
        <dbReference type="Rhea" id="RHEA:20828"/>
        <dbReference type="ChEBI" id="CHEBI:15378"/>
        <dbReference type="ChEBI" id="CHEBI:16526"/>
        <dbReference type="ChEBI" id="CHEBI:57262"/>
        <dbReference type="ChEBI" id="CHEBI:64612"/>
        <dbReference type="EC" id="4.1.1.65"/>
    </reaction>
</comment>
<comment type="cofactor">
    <cofactor evidence="1">
        <name>pyruvate</name>
        <dbReference type="ChEBI" id="CHEBI:15361"/>
    </cofactor>
    <text evidence="1">Binds 1 pyruvoyl group covalently per subunit.</text>
</comment>
<comment type="pathway">
    <text evidence="1">Phospholipid metabolism; phosphatidylethanolamine biosynthesis; phosphatidylethanolamine from CDP-diacylglycerol: step 2/2.</text>
</comment>
<comment type="subunit">
    <text evidence="1">Heterodimer of a large membrane-associated beta subunit and a small pyruvoyl-containing alpha subunit.</text>
</comment>
<comment type="subcellular location">
    <subcellularLocation>
        <location evidence="1">Cell membrane</location>
        <topology evidence="1">Peripheral membrane protein</topology>
    </subcellularLocation>
</comment>
<comment type="PTM">
    <text evidence="1">Is synthesized initially as an inactive proenzyme. Formation of the active enzyme involves a self-maturation process in which the active site pyruvoyl group is generated from an internal serine residue via an autocatalytic post-translational modification. Two non-identical subunits are generated from the proenzyme in this reaction, and the pyruvate is formed at the N-terminus of the alpha chain, which is derived from the carboxyl end of the proenzyme. The autoendoproteolytic cleavage occurs by a canonical serine protease mechanism, in which the side chain hydroxyl group of the serine supplies its oxygen atom to form the C-terminus of the beta chain, while the remainder of the serine residue undergoes an oxidative deamination to produce ammonia and the pyruvoyl prosthetic group on the alpha chain. During this reaction, the Ser that is part of the protease active site of the proenzyme becomes the pyruvoyl prosthetic group, which constitutes an essential element of the active site of the mature decarboxylase.</text>
</comment>
<comment type="similarity">
    <text evidence="1">Belongs to the phosphatidylserine decarboxylase family. PSD-B subfamily. Prokaryotic type I sub-subfamily.</text>
</comment>